<sequence length="330" mass="36200">MDAAFVIATIIKILIVLGLFSALAGFGTYVERKVLAFMQRRLGPMHVGPYGLLQVLADGIKLFTKEDFIPQGAVRPVFMIAPVITAATAFIAMAAIPMFPEFTIGGYTVKPIISDINVGLLFVLGVMAAGLYGPLLAGMSSGNKWALLGAARTAIQFLSYEVVTGLSVLAPVMIVGSISLVDFNNYQAGGMGNWLIWKQPLAFVLFLIAGYAETNRTPFDLLEHEAEVISGYATEYSGMRWGMFFIGEYANMFTIGFLVSLIFLGGFNDWGFIPGAIAILIKVFFFFFLFLWTRASWPHVRPDQLMWLCWKVLMPLAVINVVITGIVMSI</sequence>
<organism>
    <name type="scientific">Nitratiruptor sp. (strain SB155-2)</name>
    <dbReference type="NCBI Taxonomy" id="387092"/>
    <lineage>
        <taxon>Bacteria</taxon>
        <taxon>Pseudomonadati</taxon>
        <taxon>Campylobacterota</taxon>
        <taxon>Epsilonproteobacteria</taxon>
        <taxon>Nautiliales</taxon>
        <taxon>Nitratiruptoraceae</taxon>
        <taxon>Nitratiruptor</taxon>
    </lineage>
</organism>
<gene>
    <name evidence="1" type="primary">nuoH</name>
    <name type="ordered locus">NIS_0296</name>
</gene>
<feature type="chain" id="PRO_1000086945" description="NADH-quinone oxidoreductase subunit H">
    <location>
        <begin position="1"/>
        <end position="330"/>
    </location>
</feature>
<feature type="transmembrane region" description="Helical" evidence="1">
    <location>
        <begin position="3"/>
        <end position="23"/>
    </location>
</feature>
<feature type="transmembrane region" description="Helical" evidence="1">
    <location>
        <begin position="76"/>
        <end position="96"/>
    </location>
</feature>
<feature type="transmembrane region" description="Helical" evidence="1">
    <location>
        <begin position="118"/>
        <end position="138"/>
    </location>
</feature>
<feature type="transmembrane region" description="Helical" evidence="1">
    <location>
        <begin position="161"/>
        <end position="181"/>
    </location>
</feature>
<feature type="transmembrane region" description="Helical" evidence="1">
    <location>
        <begin position="188"/>
        <end position="208"/>
    </location>
</feature>
<feature type="transmembrane region" description="Helical" evidence="1">
    <location>
        <begin position="244"/>
        <end position="264"/>
    </location>
</feature>
<feature type="transmembrane region" description="Helical" evidence="1">
    <location>
        <begin position="272"/>
        <end position="292"/>
    </location>
</feature>
<feature type="transmembrane region" description="Helical" evidence="1">
    <location>
        <begin position="307"/>
        <end position="327"/>
    </location>
</feature>
<protein>
    <recommendedName>
        <fullName evidence="1">NADH-quinone oxidoreductase subunit H</fullName>
        <ecNumber evidence="1">7.1.1.-</ecNumber>
    </recommendedName>
    <alternativeName>
        <fullName evidence="1">NADH dehydrogenase I subunit H</fullName>
    </alternativeName>
    <alternativeName>
        <fullName evidence="1">NDH-1 subunit H</fullName>
    </alternativeName>
</protein>
<name>NUOH_NITSB</name>
<reference key="1">
    <citation type="journal article" date="2007" name="Proc. Natl. Acad. Sci. U.S.A.">
        <title>Deep-sea vent epsilon-proteobacterial genomes provide insights into emergence of pathogens.</title>
        <authorList>
            <person name="Nakagawa S."/>
            <person name="Takaki Y."/>
            <person name="Shimamura S."/>
            <person name="Reysenbach A.-L."/>
            <person name="Takai K."/>
            <person name="Horikoshi K."/>
        </authorList>
    </citation>
    <scope>NUCLEOTIDE SEQUENCE [LARGE SCALE GENOMIC DNA]</scope>
    <source>
        <strain>SB155-2</strain>
    </source>
</reference>
<accession>A6Q1Q1</accession>
<evidence type="ECO:0000255" key="1">
    <source>
        <dbReference type="HAMAP-Rule" id="MF_01350"/>
    </source>
</evidence>
<proteinExistence type="inferred from homology"/>
<keyword id="KW-0997">Cell inner membrane</keyword>
<keyword id="KW-1003">Cell membrane</keyword>
<keyword id="KW-0472">Membrane</keyword>
<keyword id="KW-0520">NAD</keyword>
<keyword id="KW-0874">Quinone</keyword>
<keyword id="KW-1185">Reference proteome</keyword>
<keyword id="KW-1278">Translocase</keyword>
<keyword id="KW-0812">Transmembrane</keyword>
<keyword id="KW-1133">Transmembrane helix</keyword>
<keyword id="KW-0830">Ubiquinone</keyword>
<dbReference type="EC" id="7.1.1.-" evidence="1"/>
<dbReference type="EMBL" id="AP009178">
    <property type="protein sequence ID" value="BAF69410.1"/>
    <property type="molecule type" value="Genomic_DNA"/>
</dbReference>
<dbReference type="RefSeq" id="WP_012081673.1">
    <property type="nucleotide sequence ID" value="NC_009662.1"/>
</dbReference>
<dbReference type="SMR" id="A6Q1Q1"/>
<dbReference type="FunCoup" id="A6Q1Q1">
    <property type="interactions" value="158"/>
</dbReference>
<dbReference type="STRING" id="387092.NIS_0296"/>
<dbReference type="KEGG" id="nis:NIS_0296"/>
<dbReference type="eggNOG" id="COG1005">
    <property type="taxonomic scope" value="Bacteria"/>
</dbReference>
<dbReference type="HOGENOM" id="CLU_015134_0_1_7"/>
<dbReference type="InParanoid" id="A6Q1Q1"/>
<dbReference type="OrthoDB" id="9803734at2"/>
<dbReference type="Proteomes" id="UP000001118">
    <property type="component" value="Chromosome"/>
</dbReference>
<dbReference type="GO" id="GO:0005886">
    <property type="term" value="C:plasma membrane"/>
    <property type="evidence" value="ECO:0007669"/>
    <property type="project" value="UniProtKB-SubCell"/>
</dbReference>
<dbReference type="GO" id="GO:0003954">
    <property type="term" value="F:NADH dehydrogenase activity"/>
    <property type="evidence" value="ECO:0007669"/>
    <property type="project" value="TreeGrafter"/>
</dbReference>
<dbReference type="GO" id="GO:0016655">
    <property type="term" value="F:oxidoreductase activity, acting on NAD(P)H, quinone or similar compound as acceptor"/>
    <property type="evidence" value="ECO:0007669"/>
    <property type="project" value="UniProtKB-UniRule"/>
</dbReference>
<dbReference type="GO" id="GO:0048038">
    <property type="term" value="F:quinone binding"/>
    <property type="evidence" value="ECO:0007669"/>
    <property type="project" value="UniProtKB-KW"/>
</dbReference>
<dbReference type="GO" id="GO:0009060">
    <property type="term" value="P:aerobic respiration"/>
    <property type="evidence" value="ECO:0007669"/>
    <property type="project" value="TreeGrafter"/>
</dbReference>
<dbReference type="HAMAP" id="MF_01350">
    <property type="entry name" value="NDH1_NuoH"/>
    <property type="match status" value="1"/>
</dbReference>
<dbReference type="InterPro" id="IPR001694">
    <property type="entry name" value="NADH_UbQ_OxRdtase_su1/FPO"/>
</dbReference>
<dbReference type="InterPro" id="IPR018086">
    <property type="entry name" value="NADH_UbQ_OxRdtase_su1_CS"/>
</dbReference>
<dbReference type="NCBIfam" id="NF004741">
    <property type="entry name" value="PRK06076.1-2"/>
    <property type="match status" value="1"/>
</dbReference>
<dbReference type="PANTHER" id="PTHR11432">
    <property type="entry name" value="NADH DEHYDROGENASE SUBUNIT 1"/>
    <property type="match status" value="1"/>
</dbReference>
<dbReference type="PANTHER" id="PTHR11432:SF3">
    <property type="entry name" value="NADH-UBIQUINONE OXIDOREDUCTASE CHAIN 1"/>
    <property type="match status" value="1"/>
</dbReference>
<dbReference type="Pfam" id="PF00146">
    <property type="entry name" value="NADHdh"/>
    <property type="match status" value="1"/>
</dbReference>
<dbReference type="PROSITE" id="PS00667">
    <property type="entry name" value="COMPLEX1_ND1_1"/>
    <property type="match status" value="1"/>
</dbReference>
<comment type="function">
    <text evidence="1">NDH-1 shuttles electrons from NADH, via FMN and iron-sulfur (Fe-S) centers, to quinones in the respiratory chain. The immediate electron acceptor for the enzyme in this species is believed to be ubiquinone. Couples the redox reaction to proton translocation (for every two electrons transferred, four hydrogen ions are translocated across the cytoplasmic membrane), and thus conserves the redox energy in a proton gradient. This subunit may bind ubiquinone.</text>
</comment>
<comment type="catalytic activity">
    <reaction evidence="1">
        <text>a quinone + NADH + 5 H(+)(in) = a quinol + NAD(+) + 4 H(+)(out)</text>
        <dbReference type="Rhea" id="RHEA:57888"/>
        <dbReference type="ChEBI" id="CHEBI:15378"/>
        <dbReference type="ChEBI" id="CHEBI:24646"/>
        <dbReference type="ChEBI" id="CHEBI:57540"/>
        <dbReference type="ChEBI" id="CHEBI:57945"/>
        <dbReference type="ChEBI" id="CHEBI:132124"/>
    </reaction>
</comment>
<comment type="subunit">
    <text evidence="1">NDH-1 is composed of 14 different subunits. Subunits NuoA, H, J, K, L, M, N constitute the membrane sector of the complex.</text>
</comment>
<comment type="subcellular location">
    <subcellularLocation>
        <location evidence="1">Cell inner membrane</location>
        <topology evidence="1">Multi-pass membrane protein</topology>
    </subcellularLocation>
</comment>
<comment type="similarity">
    <text evidence="1">Belongs to the complex I subunit 1 family.</text>
</comment>